<reference key="1">
    <citation type="journal article" date="2005" name="Nature">
        <title>The genome of the social amoeba Dictyostelium discoideum.</title>
        <authorList>
            <person name="Eichinger L."/>
            <person name="Pachebat J.A."/>
            <person name="Gloeckner G."/>
            <person name="Rajandream M.A."/>
            <person name="Sucgang R."/>
            <person name="Berriman M."/>
            <person name="Song J."/>
            <person name="Olsen R."/>
            <person name="Szafranski K."/>
            <person name="Xu Q."/>
            <person name="Tunggal B."/>
            <person name="Kummerfeld S."/>
            <person name="Madera M."/>
            <person name="Konfortov B.A."/>
            <person name="Rivero F."/>
            <person name="Bankier A.T."/>
            <person name="Lehmann R."/>
            <person name="Hamlin N."/>
            <person name="Davies R."/>
            <person name="Gaudet P."/>
            <person name="Fey P."/>
            <person name="Pilcher K."/>
            <person name="Chen G."/>
            <person name="Saunders D."/>
            <person name="Sodergren E.J."/>
            <person name="Davis P."/>
            <person name="Kerhornou A."/>
            <person name="Nie X."/>
            <person name="Hall N."/>
            <person name="Anjard C."/>
            <person name="Hemphill L."/>
            <person name="Bason N."/>
            <person name="Farbrother P."/>
            <person name="Desany B."/>
            <person name="Just E."/>
            <person name="Morio T."/>
            <person name="Rost R."/>
            <person name="Churcher C.M."/>
            <person name="Cooper J."/>
            <person name="Haydock S."/>
            <person name="van Driessche N."/>
            <person name="Cronin A."/>
            <person name="Goodhead I."/>
            <person name="Muzny D.M."/>
            <person name="Mourier T."/>
            <person name="Pain A."/>
            <person name="Lu M."/>
            <person name="Harper D."/>
            <person name="Lindsay R."/>
            <person name="Hauser H."/>
            <person name="James K.D."/>
            <person name="Quiles M."/>
            <person name="Madan Babu M."/>
            <person name="Saito T."/>
            <person name="Buchrieser C."/>
            <person name="Wardroper A."/>
            <person name="Felder M."/>
            <person name="Thangavelu M."/>
            <person name="Johnson D."/>
            <person name="Knights A."/>
            <person name="Loulseged H."/>
            <person name="Mungall K.L."/>
            <person name="Oliver K."/>
            <person name="Price C."/>
            <person name="Quail M.A."/>
            <person name="Urushihara H."/>
            <person name="Hernandez J."/>
            <person name="Rabbinowitsch E."/>
            <person name="Steffen D."/>
            <person name="Sanders M."/>
            <person name="Ma J."/>
            <person name="Kohara Y."/>
            <person name="Sharp S."/>
            <person name="Simmonds M.N."/>
            <person name="Spiegler S."/>
            <person name="Tivey A."/>
            <person name="Sugano S."/>
            <person name="White B."/>
            <person name="Walker D."/>
            <person name="Woodward J.R."/>
            <person name="Winckler T."/>
            <person name="Tanaka Y."/>
            <person name="Shaulsky G."/>
            <person name="Schleicher M."/>
            <person name="Weinstock G.M."/>
            <person name="Rosenthal A."/>
            <person name="Cox E.C."/>
            <person name="Chisholm R.L."/>
            <person name="Gibbs R.A."/>
            <person name="Loomis W.F."/>
            <person name="Platzer M."/>
            <person name="Kay R.R."/>
            <person name="Williams J.G."/>
            <person name="Dear P.H."/>
            <person name="Noegel A.A."/>
            <person name="Barrell B.G."/>
            <person name="Kuspa A."/>
        </authorList>
    </citation>
    <scope>NUCLEOTIDE SEQUENCE [LARGE SCALE GENOMIC DNA]</scope>
    <source>
        <strain>AX4</strain>
    </source>
</reference>
<feature type="chain" id="PRO_0000328017" description="Probable 2-ketogluconate reductase">
    <location>
        <begin position="1"/>
        <end position="334"/>
    </location>
</feature>
<feature type="active site" evidence="1">
    <location>
        <position position="246"/>
    </location>
</feature>
<feature type="active site" evidence="1">
    <location>
        <position position="275"/>
    </location>
</feature>
<feature type="active site" description="Proton donor" evidence="1">
    <location>
        <position position="294"/>
    </location>
</feature>
<feature type="binding site" evidence="1">
    <location>
        <begin position="164"/>
        <end position="165"/>
    </location>
    <ligand>
        <name>NAD(+)</name>
        <dbReference type="ChEBI" id="CHEBI:57540"/>
    </ligand>
</feature>
<feature type="binding site" evidence="1">
    <location>
        <begin position="244"/>
        <end position="246"/>
    </location>
    <ligand>
        <name>NAD(+)</name>
        <dbReference type="ChEBI" id="CHEBI:57540"/>
    </ligand>
</feature>
<feature type="binding site" evidence="1">
    <location>
        <position position="270"/>
    </location>
    <ligand>
        <name>NAD(+)</name>
        <dbReference type="ChEBI" id="CHEBI:57540"/>
    </ligand>
</feature>
<feature type="binding site" evidence="1">
    <location>
        <begin position="294"/>
        <end position="297"/>
    </location>
    <ligand>
        <name>NAD(+)</name>
        <dbReference type="ChEBI" id="CHEBI:57540"/>
    </ligand>
</feature>
<sequence>MTSIKNNNENKHIVVYRKIHQSLIEKLENQGYKVTQFEPINSNNIQEFYEAIKTANGLIGSVFKIDENVLSKAPFLECVSAISVGYDNYDLVVLNDRKIPLMHTPNVLNDSMADIMMGLMITVARKLAYCDKRMRNGEWNGPLDKSWFGLEVHHKKVGIIGMGRIGEVLAKRCRMGFDMEVAYYSRSRHLKVEELYDAKHQDLDTILSTSDFICVVLPGSQETKHFFSFGQFSKMKNSAIFINAGRGMTVDEVALIDALETGKIAGAGLDVFEKEPLNKDSKLLTLDNIVLLPHIGTSTIETQHIMSECAVNNLISALNGNLEKNCVNASIIKK</sequence>
<evidence type="ECO:0000250" key="1"/>
<evidence type="ECO:0000305" key="2"/>
<dbReference type="EC" id="1.1.1.215"/>
<dbReference type="EMBL" id="AAFI02000187">
    <property type="protein sequence ID" value="EAL61408.1"/>
    <property type="molecule type" value="Genomic_DNA"/>
</dbReference>
<dbReference type="RefSeq" id="XP_629831.1">
    <property type="nucleotide sequence ID" value="XM_629829.1"/>
</dbReference>
<dbReference type="SMR" id="Q54DP1"/>
<dbReference type="FunCoup" id="Q54DP1">
    <property type="interactions" value="166"/>
</dbReference>
<dbReference type="STRING" id="44689.Q54DP1"/>
<dbReference type="PaxDb" id="44689-DDB0231445"/>
<dbReference type="EnsemblProtists" id="EAL61408">
    <property type="protein sequence ID" value="EAL61408"/>
    <property type="gene ID" value="DDB_G0292104"/>
</dbReference>
<dbReference type="GeneID" id="8628512"/>
<dbReference type="KEGG" id="ddi:DDB_G0292104"/>
<dbReference type="dictyBase" id="DDB_G0292104">
    <property type="gene designation" value="tkrA"/>
</dbReference>
<dbReference type="VEuPathDB" id="AmoebaDB:DDB_G0292104"/>
<dbReference type="eggNOG" id="KOG0069">
    <property type="taxonomic scope" value="Eukaryota"/>
</dbReference>
<dbReference type="HOGENOM" id="CLU_019796_1_2_1"/>
<dbReference type="InParanoid" id="Q54DP1"/>
<dbReference type="OMA" id="HMGTETC"/>
<dbReference type="PhylomeDB" id="Q54DP1"/>
<dbReference type="PRO" id="PR:Q54DP1"/>
<dbReference type="Proteomes" id="UP000002195">
    <property type="component" value="Chromosome 6"/>
</dbReference>
<dbReference type="GO" id="GO:0005829">
    <property type="term" value="C:cytosol"/>
    <property type="evidence" value="ECO:0000318"/>
    <property type="project" value="GO_Central"/>
</dbReference>
<dbReference type="GO" id="GO:0008873">
    <property type="term" value="F:gluconate 2-dehydrogenase activity"/>
    <property type="evidence" value="ECO:0007669"/>
    <property type="project" value="UniProtKB-EC"/>
</dbReference>
<dbReference type="GO" id="GO:0030267">
    <property type="term" value="F:glyoxylate reductase (NADPH) activity"/>
    <property type="evidence" value="ECO:0000318"/>
    <property type="project" value="GO_Central"/>
</dbReference>
<dbReference type="GO" id="GO:0016618">
    <property type="term" value="F:hydroxypyruvate reductase [NAD(P)H] activity"/>
    <property type="evidence" value="ECO:0000318"/>
    <property type="project" value="GO_Central"/>
</dbReference>
<dbReference type="GO" id="GO:0051287">
    <property type="term" value="F:NAD binding"/>
    <property type="evidence" value="ECO:0007669"/>
    <property type="project" value="InterPro"/>
</dbReference>
<dbReference type="GO" id="GO:0019521">
    <property type="term" value="P:D-gluconate metabolic process"/>
    <property type="evidence" value="ECO:0007669"/>
    <property type="project" value="UniProtKB-KW"/>
</dbReference>
<dbReference type="CDD" id="cd05301">
    <property type="entry name" value="GDH"/>
    <property type="match status" value="1"/>
</dbReference>
<dbReference type="FunFam" id="3.40.50.720:FF:000026">
    <property type="entry name" value="Glyoxylate/hydroxypyruvate reductase B"/>
    <property type="match status" value="1"/>
</dbReference>
<dbReference type="Gene3D" id="3.40.50.720">
    <property type="entry name" value="NAD(P)-binding Rossmann-like Domain"/>
    <property type="match status" value="2"/>
</dbReference>
<dbReference type="InterPro" id="IPR050223">
    <property type="entry name" value="D-isomer_2-hydroxyacid_DH"/>
</dbReference>
<dbReference type="InterPro" id="IPR006139">
    <property type="entry name" value="D-isomer_2_OHA_DH_cat_dom"/>
</dbReference>
<dbReference type="InterPro" id="IPR006140">
    <property type="entry name" value="D-isomer_DH_NAD-bd"/>
</dbReference>
<dbReference type="InterPro" id="IPR036291">
    <property type="entry name" value="NAD(P)-bd_dom_sf"/>
</dbReference>
<dbReference type="PANTHER" id="PTHR10996">
    <property type="entry name" value="2-HYDROXYACID DEHYDROGENASE-RELATED"/>
    <property type="match status" value="1"/>
</dbReference>
<dbReference type="PANTHER" id="PTHR10996:SF257">
    <property type="entry name" value="GLYOXYLATE REDUCTASE 1"/>
    <property type="match status" value="1"/>
</dbReference>
<dbReference type="Pfam" id="PF00389">
    <property type="entry name" value="2-Hacid_dh"/>
    <property type="match status" value="1"/>
</dbReference>
<dbReference type="Pfam" id="PF02826">
    <property type="entry name" value="2-Hacid_dh_C"/>
    <property type="match status" value="1"/>
</dbReference>
<dbReference type="SUPFAM" id="SSF52283">
    <property type="entry name" value="Formate/glycerate dehydrogenase catalytic domain-like"/>
    <property type="match status" value="1"/>
</dbReference>
<dbReference type="SUPFAM" id="SSF51735">
    <property type="entry name" value="NAD(P)-binding Rossmann-fold domains"/>
    <property type="match status" value="1"/>
</dbReference>
<proteinExistence type="inferred from homology"/>
<accession>Q54DP1</accession>
<protein>
    <recommendedName>
        <fullName>Probable 2-ketogluconate reductase</fullName>
        <shortName>2KR</shortName>
        <ecNumber>1.1.1.215</ecNumber>
    </recommendedName>
    <alternativeName>
        <fullName>2-ketoaldonate reductase</fullName>
    </alternativeName>
</protein>
<name>TKRA_DICDI</name>
<comment type="function">
    <text evidence="1">Catalyzes the NADPH-dependent reduction of 2,5-diketo-D-gluconate (25DKG) to 5-keto-D-gluconate (5KDG), 2-keto-D-gluconate (2KDG) to D-gluconate, and 2-keto-L-gulonate (2KLG) to L-idonate (IA).</text>
</comment>
<comment type="catalytic activity">
    <reaction>
        <text>D-gluconate + NADP(+) = 2-dehydro-D-gluconate + NADPH + H(+)</text>
        <dbReference type="Rhea" id="RHEA:16653"/>
        <dbReference type="ChEBI" id="CHEBI:15378"/>
        <dbReference type="ChEBI" id="CHEBI:16808"/>
        <dbReference type="ChEBI" id="CHEBI:18391"/>
        <dbReference type="ChEBI" id="CHEBI:57783"/>
        <dbReference type="ChEBI" id="CHEBI:58349"/>
        <dbReference type="EC" id="1.1.1.215"/>
    </reaction>
</comment>
<comment type="subcellular location">
    <subcellularLocation>
        <location evidence="2">Cytoplasm</location>
    </subcellularLocation>
</comment>
<comment type="similarity">
    <text evidence="2">Belongs to the D-isomer specific 2-hydroxyacid dehydrogenase family.</text>
</comment>
<organism>
    <name type="scientific">Dictyostelium discoideum</name>
    <name type="common">Social amoeba</name>
    <dbReference type="NCBI Taxonomy" id="44689"/>
    <lineage>
        <taxon>Eukaryota</taxon>
        <taxon>Amoebozoa</taxon>
        <taxon>Evosea</taxon>
        <taxon>Eumycetozoa</taxon>
        <taxon>Dictyostelia</taxon>
        <taxon>Dictyosteliales</taxon>
        <taxon>Dictyosteliaceae</taxon>
        <taxon>Dictyostelium</taxon>
    </lineage>
</organism>
<gene>
    <name type="primary">tkrA</name>
    <name type="ORF">DDB_G0292104</name>
</gene>
<keyword id="KW-0963">Cytoplasm</keyword>
<keyword id="KW-0311">Gluconate utilization</keyword>
<keyword id="KW-0521">NADP</keyword>
<keyword id="KW-0560">Oxidoreductase</keyword>
<keyword id="KW-1185">Reference proteome</keyword>